<name>UBIA_VIBVU</name>
<keyword id="KW-0997">Cell inner membrane</keyword>
<keyword id="KW-1003">Cell membrane</keyword>
<keyword id="KW-0460">Magnesium</keyword>
<keyword id="KW-0472">Membrane</keyword>
<keyword id="KW-0808">Transferase</keyword>
<keyword id="KW-0812">Transmembrane</keyword>
<keyword id="KW-1133">Transmembrane helix</keyword>
<keyword id="KW-0831">Ubiquinone biosynthesis</keyword>
<dbReference type="EC" id="2.5.1.39" evidence="1"/>
<dbReference type="EMBL" id="AE016795">
    <property type="protein sequence ID" value="AAO09635.1"/>
    <property type="molecule type" value="Genomic_DNA"/>
</dbReference>
<dbReference type="RefSeq" id="WP_011079174.1">
    <property type="nucleotide sequence ID" value="NC_004459.3"/>
</dbReference>
<dbReference type="SMR" id="Q8DD49"/>
<dbReference type="KEGG" id="vvu:VV1_1164"/>
<dbReference type="HOGENOM" id="CLU_034879_1_0_6"/>
<dbReference type="UniPathway" id="UPA00232"/>
<dbReference type="Proteomes" id="UP000002275">
    <property type="component" value="Chromosome 1"/>
</dbReference>
<dbReference type="GO" id="GO:0005886">
    <property type="term" value="C:plasma membrane"/>
    <property type="evidence" value="ECO:0007669"/>
    <property type="project" value="UniProtKB-SubCell"/>
</dbReference>
<dbReference type="GO" id="GO:0008412">
    <property type="term" value="F:4-hydroxybenzoate polyprenyltransferase activity"/>
    <property type="evidence" value="ECO:0007669"/>
    <property type="project" value="UniProtKB-UniRule"/>
</dbReference>
<dbReference type="GO" id="GO:0006744">
    <property type="term" value="P:ubiquinone biosynthetic process"/>
    <property type="evidence" value="ECO:0007669"/>
    <property type="project" value="UniProtKB-UniRule"/>
</dbReference>
<dbReference type="CDD" id="cd13959">
    <property type="entry name" value="PT_UbiA_COQ2"/>
    <property type="match status" value="1"/>
</dbReference>
<dbReference type="FunFam" id="1.10.357.140:FF:000002">
    <property type="entry name" value="4-hydroxybenzoate octaprenyltransferase"/>
    <property type="match status" value="1"/>
</dbReference>
<dbReference type="FunFam" id="1.20.120.1780:FF:000001">
    <property type="entry name" value="4-hydroxybenzoate octaprenyltransferase"/>
    <property type="match status" value="1"/>
</dbReference>
<dbReference type="Gene3D" id="1.10.357.140">
    <property type="entry name" value="UbiA prenyltransferase"/>
    <property type="match status" value="1"/>
</dbReference>
<dbReference type="Gene3D" id="1.20.120.1780">
    <property type="entry name" value="UbiA prenyltransferase"/>
    <property type="match status" value="1"/>
</dbReference>
<dbReference type="HAMAP" id="MF_01635">
    <property type="entry name" value="UbiA"/>
    <property type="match status" value="1"/>
</dbReference>
<dbReference type="InterPro" id="IPR006370">
    <property type="entry name" value="HB_polyprenyltransferase-like"/>
</dbReference>
<dbReference type="InterPro" id="IPR039653">
    <property type="entry name" value="Prenyltransferase"/>
</dbReference>
<dbReference type="InterPro" id="IPR000537">
    <property type="entry name" value="UbiA_prenyltransferase"/>
</dbReference>
<dbReference type="InterPro" id="IPR044878">
    <property type="entry name" value="UbiA_sf"/>
</dbReference>
<dbReference type="NCBIfam" id="TIGR01474">
    <property type="entry name" value="ubiA_proteo"/>
    <property type="match status" value="1"/>
</dbReference>
<dbReference type="PANTHER" id="PTHR11048:SF28">
    <property type="entry name" value="4-HYDROXYBENZOATE POLYPRENYLTRANSFERASE, MITOCHONDRIAL"/>
    <property type="match status" value="1"/>
</dbReference>
<dbReference type="PANTHER" id="PTHR11048">
    <property type="entry name" value="PRENYLTRANSFERASES"/>
    <property type="match status" value="1"/>
</dbReference>
<dbReference type="Pfam" id="PF01040">
    <property type="entry name" value="UbiA"/>
    <property type="match status" value="1"/>
</dbReference>
<feature type="chain" id="PRO_0000262852" description="4-hydroxybenzoate octaprenyltransferase">
    <location>
        <begin position="1"/>
        <end position="284"/>
    </location>
</feature>
<feature type="transmembrane region" description="Helical" evidence="1">
    <location>
        <begin position="18"/>
        <end position="38"/>
    </location>
</feature>
<feature type="transmembrane region" description="Helical" evidence="1">
    <location>
        <begin position="42"/>
        <end position="62"/>
    </location>
</feature>
<feature type="transmembrane region" description="Helical" evidence="1">
    <location>
        <begin position="93"/>
        <end position="113"/>
    </location>
</feature>
<feature type="transmembrane region" description="Helical" evidence="1">
    <location>
        <begin position="136"/>
        <end position="156"/>
    </location>
</feature>
<feature type="transmembrane region" description="Helical" evidence="1">
    <location>
        <begin position="161"/>
        <end position="181"/>
    </location>
</feature>
<feature type="transmembrane region" description="Helical" evidence="1">
    <location>
        <begin position="209"/>
        <end position="229"/>
    </location>
</feature>
<feature type="transmembrane region" description="Helical" evidence="1">
    <location>
        <begin position="233"/>
        <end position="253"/>
    </location>
</feature>
<feature type="transmembrane region" description="Helical" evidence="1">
    <location>
        <begin position="264"/>
        <end position="284"/>
    </location>
</feature>
<protein>
    <recommendedName>
        <fullName evidence="1">4-hydroxybenzoate octaprenyltransferase</fullName>
        <ecNumber evidence="1">2.5.1.39</ecNumber>
    </recommendedName>
    <alternativeName>
        <fullName evidence="1">4-HB polyprenyltransferase</fullName>
    </alternativeName>
</protein>
<proteinExistence type="inferred from homology"/>
<sequence>MSVEKAKAYWQLMRMDRPIGTLLLLWPTLWALIIAAEGTPDWHVLLVFVLGVVLMRSAGCVINDFADRKVDGHVKRTQQRPLPSGRVTAKEAIILFLLLGISSFLLVLTMNPLTIQLSFAGIVLAFIYPFMKRYTHLPQLFLGLAFSWAIPMAWAAQANELPWVVWFVFAINALWTIAYDTQYAMVDRDDDVHIGVKSTAILFGRHDKLIIGLLQLLTLVMLVWLGLHYQLGQSFYWSVLAAGALFVYQQHLIRHRQRELCFQAFLNNNYVGMVLALGLFVAFW</sequence>
<accession>Q8DD49</accession>
<evidence type="ECO:0000255" key="1">
    <source>
        <dbReference type="HAMAP-Rule" id="MF_01635"/>
    </source>
</evidence>
<reference key="1">
    <citation type="submission" date="2002-12" db="EMBL/GenBank/DDBJ databases">
        <title>Complete genome sequence of Vibrio vulnificus CMCP6.</title>
        <authorList>
            <person name="Rhee J.H."/>
            <person name="Kim S.Y."/>
            <person name="Chung S.S."/>
            <person name="Kim J.J."/>
            <person name="Moon Y.H."/>
            <person name="Jeong H."/>
            <person name="Choy H.E."/>
        </authorList>
    </citation>
    <scope>NUCLEOTIDE SEQUENCE [LARGE SCALE GENOMIC DNA]</scope>
    <source>
        <strain>CMCP6</strain>
    </source>
</reference>
<organism>
    <name type="scientific">Vibrio vulnificus (strain CMCP6)</name>
    <dbReference type="NCBI Taxonomy" id="216895"/>
    <lineage>
        <taxon>Bacteria</taxon>
        <taxon>Pseudomonadati</taxon>
        <taxon>Pseudomonadota</taxon>
        <taxon>Gammaproteobacteria</taxon>
        <taxon>Vibrionales</taxon>
        <taxon>Vibrionaceae</taxon>
        <taxon>Vibrio</taxon>
    </lineage>
</organism>
<gene>
    <name evidence="1" type="primary">ubiA</name>
    <name type="ordered locus">VV1_1164</name>
</gene>
<comment type="function">
    <text evidence="1">Catalyzes the prenylation of para-hydroxybenzoate (PHB) with an all-trans polyprenyl group. Mediates the second step in the final reaction sequence of ubiquinone-8 (UQ-8) biosynthesis, which is the condensation of the polyisoprenoid side chain with PHB, generating the first membrane-bound Q intermediate 3-octaprenyl-4-hydroxybenzoate.</text>
</comment>
<comment type="catalytic activity">
    <reaction evidence="1">
        <text>all-trans-octaprenyl diphosphate + 4-hydroxybenzoate = 4-hydroxy-3-(all-trans-octaprenyl)benzoate + diphosphate</text>
        <dbReference type="Rhea" id="RHEA:27782"/>
        <dbReference type="ChEBI" id="CHEBI:1617"/>
        <dbReference type="ChEBI" id="CHEBI:17879"/>
        <dbReference type="ChEBI" id="CHEBI:33019"/>
        <dbReference type="ChEBI" id="CHEBI:57711"/>
        <dbReference type="EC" id="2.5.1.39"/>
    </reaction>
</comment>
<comment type="cofactor">
    <cofactor evidence="1">
        <name>Mg(2+)</name>
        <dbReference type="ChEBI" id="CHEBI:18420"/>
    </cofactor>
</comment>
<comment type="pathway">
    <text evidence="1">Cofactor biosynthesis; ubiquinone biosynthesis.</text>
</comment>
<comment type="subcellular location">
    <subcellularLocation>
        <location evidence="1">Cell inner membrane</location>
        <topology evidence="1">Multi-pass membrane protein</topology>
    </subcellularLocation>
</comment>
<comment type="similarity">
    <text evidence="1">Belongs to the UbiA prenyltransferase family.</text>
</comment>